<sequence length="134" mass="14607">MRSFRAAELPDRNSIASISGLIGSDLIQMIRFDDMHSLFVGEEALRVGLTAFTIFDGYPIPLAGQIALLGGDGSKPYRSPSITMTEAARRFECCRPVLDPVFAPMDRVANKGLIVAGALESLQVRIDRRSPVLL</sequence>
<comment type="function">
    <text>Could be involved directly or indirectly in exopolysaccharide synthesis.</text>
</comment>
<dbReference type="EMBL" id="L26581">
    <property type="status" value="NOT_ANNOTATED_CDS"/>
    <property type="molecule type" value="Genomic_DNA"/>
</dbReference>
<accession>P55758</accession>
<name>PSIB_RHILP</name>
<geneLocation type="plasmid">
    <name>sym pRP2JI</name>
</geneLocation>
<organism>
    <name type="scientific">Rhizobium leguminosarum bv. phaseoli</name>
    <dbReference type="NCBI Taxonomy" id="385"/>
    <lineage>
        <taxon>Bacteria</taxon>
        <taxon>Pseudomonadati</taxon>
        <taxon>Pseudomonadota</taxon>
        <taxon>Alphaproteobacteria</taxon>
        <taxon>Hyphomicrobiales</taxon>
        <taxon>Rhizobiaceae</taxon>
        <taxon>Rhizobium/Agrobacterium group</taxon>
        <taxon>Rhizobium</taxon>
    </lineage>
</organism>
<keyword id="KW-0614">Plasmid</keyword>
<protein>
    <recommendedName>
        <fullName>Protein PsiB</fullName>
    </recommendedName>
</protein>
<reference key="1">
    <citation type="journal article" date="1994" name="Microbiology">
        <title>The psi operon of Rhizobium leguminosarum biovar phaseoli: identification of two genes whose products are located at the bacterial cell surface.</title>
        <authorList>
            <person name="Mimmack M.L."/>
            <person name="Borthakur D."/>
            <person name="Jones M.A."/>
            <person name="Downie J.A."/>
            <person name="Johnston A.W."/>
        </authorList>
    </citation>
    <scope>NUCLEOTIDE SEQUENCE [GENOMIC DNA]</scope>
    <source>
        <strain>8401</strain>
    </source>
</reference>
<proteinExistence type="predicted"/>
<feature type="chain" id="PRO_0000097067" description="Protein PsiB">
    <location>
        <begin position="1"/>
        <end position="134"/>
    </location>
</feature>
<gene>
    <name type="primary">psiB</name>
</gene>